<geneLocation type="mitochondrion"/>
<keyword id="KW-0249">Electron transport</keyword>
<keyword id="KW-0349">Heme</keyword>
<keyword id="KW-0408">Iron</keyword>
<keyword id="KW-0472">Membrane</keyword>
<keyword id="KW-0479">Metal-binding</keyword>
<keyword id="KW-0496">Mitochondrion</keyword>
<keyword id="KW-0999">Mitochondrion inner membrane</keyword>
<keyword id="KW-0679">Respiratory chain</keyword>
<keyword id="KW-0812">Transmembrane</keyword>
<keyword id="KW-1133">Transmembrane helix</keyword>
<keyword id="KW-0813">Transport</keyword>
<keyword id="KW-0830">Ubiquinone</keyword>
<sequence>MKIIRKNHPLLKIINHSFIDLPTPSNISSWWNFGSLLGICLMIQILTGLFLAMHYTSDTTTAFSSVAHICRDVNYGWLIRYLHANGASMFFICLFIHVGRGIYYGSYVLSETWNIGIILFFTTMATAFVGYVLPWGQMSFWGATVITNLLSAIPYIGTTLVEWIWGGFSVDKATLTRFFAFHFILPFIITAFVLVHLLFLHETGSNNPSGLNSDSDKIPFHPYYTIKDLLGILLLLMALMILALFFPDVLGDPDNFTPANPLNTPAHIKPXWYFLFAYAILRSIPNKLGGVLALILSILILAAFPLLNTSKQHGLIYRPITQTIYWTFIANLLILTWIGGQPVKYPFTMXGXIASITYFIIIIILMPMSNTIENNIIKL</sequence>
<gene>
    <name type="primary">MT-CYB</name>
    <name type="synonym">COB</name>
    <name type="synonym">CYTB</name>
    <name type="synonym">MTCYB</name>
</gene>
<feature type="chain" id="PRO_0000060679" description="Cytochrome b">
    <location>
        <begin position="1"/>
        <end position="379"/>
    </location>
</feature>
<feature type="transmembrane region" description="Helical" evidence="2">
    <location>
        <begin position="33"/>
        <end position="53"/>
    </location>
</feature>
<feature type="transmembrane region" description="Helical" evidence="2">
    <location>
        <begin position="77"/>
        <end position="98"/>
    </location>
</feature>
<feature type="transmembrane region" description="Helical" evidence="2">
    <location>
        <begin position="113"/>
        <end position="133"/>
    </location>
</feature>
<feature type="transmembrane region" description="Helical" evidence="2">
    <location>
        <begin position="178"/>
        <end position="198"/>
    </location>
</feature>
<feature type="transmembrane region" description="Helical" evidence="2">
    <location>
        <begin position="226"/>
        <end position="246"/>
    </location>
</feature>
<feature type="transmembrane region" description="Helical" evidence="2">
    <location>
        <begin position="288"/>
        <end position="308"/>
    </location>
</feature>
<feature type="transmembrane region" description="Helical" evidence="2">
    <location>
        <begin position="320"/>
        <end position="340"/>
    </location>
</feature>
<feature type="transmembrane region" description="Helical" evidence="2">
    <location>
        <begin position="347"/>
        <end position="367"/>
    </location>
</feature>
<feature type="binding site" description="axial binding residue" evidence="2">
    <location>
        <position position="83"/>
    </location>
    <ligand>
        <name>heme b</name>
        <dbReference type="ChEBI" id="CHEBI:60344"/>
        <label>b562</label>
    </ligand>
    <ligandPart>
        <name>Fe</name>
        <dbReference type="ChEBI" id="CHEBI:18248"/>
    </ligandPart>
</feature>
<feature type="binding site" description="axial binding residue" evidence="2">
    <location>
        <position position="97"/>
    </location>
    <ligand>
        <name>heme b</name>
        <dbReference type="ChEBI" id="CHEBI:60344"/>
        <label>b566</label>
    </ligand>
    <ligandPart>
        <name>Fe</name>
        <dbReference type="ChEBI" id="CHEBI:18248"/>
    </ligandPart>
</feature>
<feature type="binding site" description="axial binding residue" evidence="2">
    <location>
        <position position="182"/>
    </location>
    <ligand>
        <name>heme b</name>
        <dbReference type="ChEBI" id="CHEBI:60344"/>
        <label>b562</label>
    </ligand>
    <ligandPart>
        <name>Fe</name>
        <dbReference type="ChEBI" id="CHEBI:18248"/>
    </ligandPart>
</feature>
<feature type="binding site" description="axial binding residue" evidence="2">
    <location>
        <position position="196"/>
    </location>
    <ligand>
        <name>heme b</name>
        <dbReference type="ChEBI" id="CHEBI:60344"/>
        <label>b566</label>
    </ligand>
    <ligandPart>
        <name>Fe</name>
        <dbReference type="ChEBI" id="CHEBI:18248"/>
    </ligandPart>
</feature>
<feature type="binding site" evidence="2">
    <location>
        <position position="201"/>
    </location>
    <ligand>
        <name>a ubiquinone</name>
        <dbReference type="ChEBI" id="CHEBI:16389"/>
    </ligand>
</feature>
<evidence type="ECO:0000250" key="1"/>
<evidence type="ECO:0000250" key="2">
    <source>
        <dbReference type="UniProtKB" id="P00157"/>
    </source>
</evidence>
<evidence type="ECO:0000255" key="3">
    <source>
        <dbReference type="PROSITE-ProRule" id="PRU00967"/>
    </source>
</evidence>
<evidence type="ECO:0000255" key="4">
    <source>
        <dbReference type="PROSITE-ProRule" id="PRU00968"/>
    </source>
</evidence>
<name>CYB_NECAO</name>
<dbReference type="EMBL" id="M35711">
    <property type="protein sequence ID" value="AAA16994.2"/>
    <property type="molecule type" value="Genomic_DNA"/>
</dbReference>
<dbReference type="EMBL" id="M35712">
    <property type="protein sequence ID" value="AAA31643.1"/>
    <property type="molecule type" value="Genomic_DNA"/>
</dbReference>
<dbReference type="PIR" id="A41824">
    <property type="entry name" value="A41824"/>
</dbReference>
<dbReference type="GO" id="GO:0005743">
    <property type="term" value="C:mitochondrial inner membrane"/>
    <property type="evidence" value="ECO:0007669"/>
    <property type="project" value="UniProtKB-SubCell"/>
</dbReference>
<dbReference type="GO" id="GO:0045275">
    <property type="term" value="C:respiratory chain complex III"/>
    <property type="evidence" value="ECO:0007669"/>
    <property type="project" value="InterPro"/>
</dbReference>
<dbReference type="GO" id="GO:0046872">
    <property type="term" value="F:metal ion binding"/>
    <property type="evidence" value="ECO:0007669"/>
    <property type="project" value="UniProtKB-KW"/>
</dbReference>
<dbReference type="GO" id="GO:0008121">
    <property type="term" value="F:ubiquinol-cytochrome-c reductase activity"/>
    <property type="evidence" value="ECO:0007669"/>
    <property type="project" value="InterPro"/>
</dbReference>
<dbReference type="GO" id="GO:0006122">
    <property type="term" value="P:mitochondrial electron transport, ubiquinol to cytochrome c"/>
    <property type="evidence" value="ECO:0007669"/>
    <property type="project" value="TreeGrafter"/>
</dbReference>
<dbReference type="CDD" id="cd00290">
    <property type="entry name" value="cytochrome_b_C"/>
    <property type="match status" value="1"/>
</dbReference>
<dbReference type="CDD" id="cd00284">
    <property type="entry name" value="Cytochrome_b_N"/>
    <property type="match status" value="1"/>
</dbReference>
<dbReference type="FunFam" id="1.20.810.10:FF:000002">
    <property type="entry name" value="Cytochrome b"/>
    <property type="match status" value="1"/>
</dbReference>
<dbReference type="Gene3D" id="1.20.810.10">
    <property type="entry name" value="Cytochrome Bc1 Complex, Chain C"/>
    <property type="match status" value="1"/>
</dbReference>
<dbReference type="InterPro" id="IPR005798">
    <property type="entry name" value="Cyt_b/b6_C"/>
</dbReference>
<dbReference type="InterPro" id="IPR036150">
    <property type="entry name" value="Cyt_b/b6_C_sf"/>
</dbReference>
<dbReference type="InterPro" id="IPR005797">
    <property type="entry name" value="Cyt_b/b6_N"/>
</dbReference>
<dbReference type="InterPro" id="IPR027387">
    <property type="entry name" value="Cytb/b6-like_sf"/>
</dbReference>
<dbReference type="InterPro" id="IPR030689">
    <property type="entry name" value="Cytochrome_b"/>
</dbReference>
<dbReference type="InterPro" id="IPR048260">
    <property type="entry name" value="Cytochrome_b_C_euk/bac"/>
</dbReference>
<dbReference type="InterPro" id="IPR048259">
    <property type="entry name" value="Cytochrome_b_N_euk/bac"/>
</dbReference>
<dbReference type="InterPro" id="IPR016174">
    <property type="entry name" value="Di-haem_cyt_TM"/>
</dbReference>
<dbReference type="PANTHER" id="PTHR19271">
    <property type="entry name" value="CYTOCHROME B"/>
    <property type="match status" value="1"/>
</dbReference>
<dbReference type="PANTHER" id="PTHR19271:SF16">
    <property type="entry name" value="CYTOCHROME B"/>
    <property type="match status" value="1"/>
</dbReference>
<dbReference type="Pfam" id="PF00032">
    <property type="entry name" value="Cytochrom_B_C"/>
    <property type="match status" value="1"/>
</dbReference>
<dbReference type="Pfam" id="PF00033">
    <property type="entry name" value="Cytochrome_B"/>
    <property type="match status" value="1"/>
</dbReference>
<dbReference type="PIRSF" id="PIRSF038885">
    <property type="entry name" value="COB"/>
    <property type="match status" value="1"/>
</dbReference>
<dbReference type="SUPFAM" id="SSF81648">
    <property type="entry name" value="a domain/subunit of cytochrome bc1 complex (Ubiquinol-cytochrome c reductase)"/>
    <property type="match status" value="1"/>
</dbReference>
<dbReference type="SUPFAM" id="SSF81342">
    <property type="entry name" value="Transmembrane di-heme cytochromes"/>
    <property type="match status" value="1"/>
</dbReference>
<dbReference type="PROSITE" id="PS51003">
    <property type="entry name" value="CYTB_CTER"/>
    <property type="match status" value="1"/>
</dbReference>
<dbReference type="PROSITE" id="PS51002">
    <property type="entry name" value="CYTB_NTER"/>
    <property type="match status" value="1"/>
</dbReference>
<organism>
    <name type="scientific">Necromys amoenus</name>
    <name type="common">Pleasant bolo mouse</name>
    <name type="synonym">Bolomys amoenus</name>
    <dbReference type="NCBI Taxonomy" id="10081"/>
    <lineage>
        <taxon>Eukaryota</taxon>
        <taxon>Metazoa</taxon>
        <taxon>Chordata</taxon>
        <taxon>Craniata</taxon>
        <taxon>Vertebrata</taxon>
        <taxon>Euteleostomi</taxon>
        <taxon>Mammalia</taxon>
        <taxon>Eutheria</taxon>
        <taxon>Euarchontoglires</taxon>
        <taxon>Glires</taxon>
        <taxon>Rodentia</taxon>
        <taxon>Myomorpha</taxon>
        <taxon>Muroidea</taxon>
        <taxon>Cricetidae</taxon>
        <taxon>Sigmodontinae</taxon>
        <taxon>Necromys</taxon>
    </lineage>
</organism>
<protein>
    <recommendedName>
        <fullName>Cytochrome b</fullName>
    </recommendedName>
    <alternativeName>
        <fullName>Complex III subunit 3</fullName>
    </alternativeName>
    <alternativeName>
        <fullName>Complex III subunit III</fullName>
    </alternativeName>
    <alternativeName>
        <fullName>Cytochrome b-c1 complex subunit 3</fullName>
    </alternativeName>
    <alternativeName>
        <fullName>Ubiquinol-cytochrome-c reductase complex cytochrome b subunit</fullName>
    </alternativeName>
</protein>
<reference key="1">
    <citation type="submission" date="1999-07" db="EMBL/GenBank/DDBJ databases">
        <authorList>
            <person name="Smith M.F."/>
        </authorList>
    </citation>
    <scope>NUCLEOTIDE SEQUENCE [GENOMIC DNA]</scope>
    <source>
        <tissue>Liver</tissue>
    </source>
</reference>
<reference key="2">
    <citation type="journal article" date="1993" name="Biol. J. Linn. Soc. Lond.">
        <title>The diversification of South American murid rodents: evidence from mitochondrial DNA sequence data for the akodontine tribe.</title>
        <authorList>
            <person name="Smith M.F."/>
            <person name="Patton J.L."/>
        </authorList>
    </citation>
    <scope>NUCLEOTIDE SEQUENCE [GENOMIC DNA] OF 1-267</scope>
</reference>
<reference key="3">
    <citation type="journal article" date="1991" name="Mol. Biol. Evol.">
        <title>Variation in mitochondrial cytochrome b sequence in natural populations of South American akodontine rodents (Muridae: Sigmodontinae).</title>
        <authorList>
            <person name="Smith M.F."/>
            <person name="Patton J.L."/>
        </authorList>
    </citation>
    <scope>NUCLEOTIDE SEQUENCE [GENOMIC DNA] OF 1-134</scope>
    <source>
        <strain>Isolate MVZ 172878</strain>
        <strain>Isolate MVZ 172879</strain>
        <tissue>Liver</tissue>
    </source>
</reference>
<comment type="function">
    <text evidence="2">Component of the ubiquinol-cytochrome c reductase complex (complex III or cytochrome b-c1 complex) that is part of the mitochondrial respiratory chain. The b-c1 complex mediates electron transfer from ubiquinol to cytochrome c. Contributes to the generation of a proton gradient across the mitochondrial membrane that is then used for ATP synthesis.</text>
</comment>
<comment type="cofactor">
    <cofactor evidence="2">
        <name>heme b</name>
        <dbReference type="ChEBI" id="CHEBI:60344"/>
    </cofactor>
    <text evidence="2">Binds 2 heme b groups non-covalently.</text>
</comment>
<comment type="subunit">
    <text evidence="2">The cytochrome bc1 complex contains 11 subunits: 3 respiratory subunits (MT-CYB, CYC1 and UQCRFS1), 2 core proteins (UQCRC1 and UQCRC2) and 6 low-molecular weight proteins (UQCRH/QCR6, UQCRB/QCR7, UQCRQ/QCR8, UQCR10/QCR9, UQCR11/QCR10 and a cleavage product of UQCRFS1). This cytochrome bc1 complex then forms a dimer.</text>
</comment>
<comment type="subcellular location">
    <subcellularLocation>
        <location evidence="2">Mitochondrion inner membrane</location>
        <topology evidence="2">Multi-pass membrane protein</topology>
    </subcellularLocation>
</comment>
<comment type="miscellaneous">
    <text evidence="1">Heme 1 (or BL or b562) is low-potential and absorbs at about 562 nm, and heme 2 (or BH or b566) is high-potential and absorbs at about 566 nm.</text>
</comment>
<comment type="similarity">
    <text evidence="3 4">Belongs to the cytochrome b family.</text>
</comment>
<comment type="caution">
    <text evidence="2">The full-length protein contains only eight transmembrane helices, not nine as predicted by bioinformatics tools.</text>
</comment>
<proteinExistence type="inferred from homology"/>
<accession>P21722</accession>